<gene>
    <name type="primary">SDE2</name>
</gene>
<sequence>MAEAAALVWIRGPGFGCKAVRCASARCTVRDFIHRHCQDQNVPVENFFVKCNGALIYTSDTVQHGAVYSLEPRLCGGKGGFGSMLRALGAQIEKTTNREACRDLSGRRLRDVNHEKAMAEWVKQQAEREAEKEQKRLERLQRKLVEPKHCFTSPDYQQQCHEMAERLEDSVLKGMQAASSKMVSAEISENRKRQWPTKSQTDREASAGKRRYFWLGMEGLETAEGSSSESSDDDSEEAPSTSGMGFHAPKIGGSGVEMAAKFPSGSQRARVVNTDPGSPEQLQIPVTDSGRHISEDSCAELGESKEHMESRMVTETEETQEKKAESREPIEEEPTGAGLNKDKETEERTDGERVAEVACEERENVAVAKLQESQPGNAVIDKETIDLLAFTSVAELELLGLEKLKCELMALGLKCGGTLQERAARLFSVRGLAKEQIDPALFAKPLKGKKK</sequence>
<proteinExistence type="evidence at transcript level"/>
<accession>Q5RET9</accession>
<name>SDE2_PONAB</name>
<protein>
    <recommendedName>
        <fullName evidence="7">Splicing regulator SDE2</fullName>
    </recommendedName>
    <alternativeName>
        <fullName evidence="7">Replication stress response regulator SDE2</fullName>
    </alternativeName>
</protein>
<evidence type="ECO:0000250" key="1">
    <source>
        <dbReference type="UniProtKB" id="O14113"/>
    </source>
</evidence>
<evidence type="ECO:0000250" key="2">
    <source>
        <dbReference type="UniProtKB" id="Q5BJN8"/>
    </source>
</evidence>
<evidence type="ECO:0000250" key="3">
    <source>
        <dbReference type="UniProtKB" id="Q6IQ49"/>
    </source>
</evidence>
<evidence type="ECO:0000250" key="4">
    <source>
        <dbReference type="UniProtKB" id="Q8K1J5"/>
    </source>
</evidence>
<evidence type="ECO:0000255" key="5"/>
<evidence type="ECO:0000256" key="6">
    <source>
        <dbReference type="SAM" id="MobiDB-lite"/>
    </source>
</evidence>
<evidence type="ECO:0000305" key="7"/>
<comment type="function">
    <text evidence="3">Inhibits translesion DNA synthesis by preventing monoubiquitination of PCNA, this is necessary to counteract damage due to ultraviolet light-induced replication stress (By similarity). SDE2 is cleaved following PCNA binding, and its complete degradation is necessary to allow S-phase progression following DNA damage (By similarity).</text>
</comment>
<comment type="function">
    <text evidence="1 3">Plays a role in pre-mRNA splicing by facilitating excision of relatively short introns featuring weak 3'-splice sites (ss) and high GC content (By similarity). May recruit CACTIN to the spliceosome (By similarity).</text>
</comment>
<comment type="function">
    <text evidence="3">Plays a role in ribosome biogenesis by enabling SNORD3- and SNORD118-dependent cleavage of the 47S rRNA precursor (By similarity). Binds ncRNA (non-coding RNA) including the snoRNAs SNORD3 and SNORD118 (By similarity).</text>
</comment>
<comment type="subunit">
    <text evidence="3">Interacts (via PIP-box) with PCNA; the interaction is direct and prevents ultraviolet light induced monoubiquitination of PCNA (By similarity). Interacts with FBL/fibrillarin (By similarity). Interacts with CACTIN (By similarity). Interacts with SF3B1 (By similarity). Interacts with U2AF1 (By similarity).</text>
</comment>
<comment type="subcellular location">
    <subcellularLocation>
        <location evidence="3">Nucleus</location>
    </subcellularLocation>
    <subcellularLocation>
        <location evidence="3">Cytoplasm</location>
    </subcellularLocation>
</comment>
<comment type="domain">
    <text evidence="3">The PIP-box (PCNA interacting peptide) motif mediates both the interaction with PCNA and cleavage of the SDE2 precursor by a deubiquitinating enzyme.</text>
</comment>
<comment type="domain">
    <text evidence="3">The SAP domain is necessary for specific binding to DNA.</text>
</comment>
<comment type="domain">
    <text evidence="3">The propeptide displays a ubiquitin-like fold.</text>
</comment>
<comment type="PTM">
    <text evidence="3">Upon binding to PCNA, the N-terminal UBL (ubiquitin-like) propeptide is cleaved at Gly-77 by an unidentified deubiquitinating enzyme; the resulting mature SDE2 is degraded by the DCX(DTL) complex in a cell cycle- and DNA damage dependent manner.</text>
</comment>
<comment type="PTM">
    <text evidence="3">Both SDE2-UBL and the mature SDE2 are polyubiquitinated.</text>
</comment>
<comment type="similarity">
    <text evidence="7">Belongs to the SDE2 family.</text>
</comment>
<keyword id="KW-0131">Cell cycle</keyword>
<keyword id="KW-0132">Cell division</keyword>
<keyword id="KW-0175">Coiled coil</keyword>
<keyword id="KW-0963">Cytoplasm</keyword>
<keyword id="KW-0235">DNA replication</keyword>
<keyword id="KW-0238">DNA-binding</keyword>
<keyword id="KW-0498">Mitosis</keyword>
<keyword id="KW-0507">mRNA processing</keyword>
<keyword id="KW-0508">mRNA splicing</keyword>
<keyword id="KW-0539">Nucleus</keyword>
<keyword id="KW-0597">Phosphoprotein</keyword>
<keyword id="KW-1185">Reference proteome</keyword>
<keyword id="KW-0690">Ribosome biogenesis</keyword>
<keyword id="KW-0694">RNA-binding</keyword>
<keyword id="KW-0832">Ubl conjugation</keyword>
<dbReference type="EMBL" id="CR857420">
    <property type="protein sequence ID" value="CAH89711.1"/>
    <property type="molecule type" value="mRNA"/>
</dbReference>
<dbReference type="EMBL" id="CR857427">
    <property type="protein sequence ID" value="CAH89718.1"/>
    <property type="molecule type" value="mRNA"/>
</dbReference>
<dbReference type="RefSeq" id="NP_001124780.1">
    <property type="nucleotide sequence ID" value="NM_001131308.1"/>
</dbReference>
<dbReference type="SMR" id="Q5RET9"/>
<dbReference type="FunCoup" id="Q5RET9">
    <property type="interactions" value="4193"/>
</dbReference>
<dbReference type="STRING" id="9601.ENSPPYP00000000167"/>
<dbReference type="GeneID" id="100171633"/>
<dbReference type="KEGG" id="pon:100171633"/>
<dbReference type="CTD" id="163859"/>
<dbReference type="eggNOG" id="KOG2827">
    <property type="taxonomic scope" value="Eukaryota"/>
</dbReference>
<dbReference type="InParanoid" id="Q5RET9"/>
<dbReference type="OrthoDB" id="547031at2759"/>
<dbReference type="Proteomes" id="UP000001595">
    <property type="component" value="Unplaced"/>
</dbReference>
<dbReference type="GO" id="GO:0005737">
    <property type="term" value="C:cytoplasm"/>
    <property type="evidence" value="ECO:0000250"/>
    <property type="project" value="UniProtKB"/>
</dbReference>
<dbReference type="GO" id="GO:0005634">
    <property type="term" value="C:nucleus"/>
    <property type="evidence" value="ECO:0000250"/>
    <property type="project" value="UniProtKB"/>
</dbReference>
<dbReference type="GO" id="GO:0003677">
    <property type="term" value="F:DNA binding"/>
    <property type="evidence" value="ECO:0007669"/>
    <property type="project" value="UniProtKB-KW"/>
</dbReference>
<dbReference type="GO" id="GO:0030515">
    <property type="term" value="F:snoRNA binding"/>
    <property type="evidence" value="ECO:0000250"/>
    <property type="project" value="UniProtKB"/>
</dbReference>
<dbReference type="GO" id="GO:0051301">
    <property type="term" value="P:cell division"/>
    <property type="evidence" value="ECO:0007669"/>
    <property type="project" value="UniProtKB-KW"/>
</dbReference>
<dbReference type="GO" id="GO:0006260">
    <property type="term" value="P:DNA replication"/>
    <property type="evidence" value="ECO:0007669"/>
    <property type="project" value="UniProtKB-KW"/>
</dbReference>
<dbReference type="GO" id="GO:0000479">
    <property type="term" value="P:endonucleolytic cleavage of tricistronic rRNA transcript (SSU-rRNA, 5.8S rRNA, LSU-rRNA)"/>
    <property type="evidence" value="ECO:0000250"/>
    <property type="project" value="UniProtKB"/>
</dbReference>
<dbReference type="GO" id="GO:0045292">
    <property type="term" value="P:mRNA cis splicing, via spliceosome"/>
    <property type="evidence" value="ECO:0000250"/>
    <property type="project" value="UniProtKB"/>
</dbReference>
<dbReference type="InterPro" id="IPR051421">
    <property type="entry name" value="RNA_Proc_DNA_Dmg_Regulator"/>
</dbReference>
<dbReference type="InterPro" id="IPR053822">
    <property type="entry name" value="SDE2-like_dom"/>
</dbReference>
<dbReference type="InterPro" id="IPR025086">
    <property type="entry name" value="SDE2/SF3A3_SAP"/>
</dbReference>
<dbReference type="InterPro" id="IPR053821">
    <property type="entry name" value="Sde2_Ubi"/>
</dbReference>
<dbReference type="PANTHER" id="PTHR12786">
    <property type="entry name" value="SPLICING FACTOR SF3A-RELATED"/>
    <property type="match status" value="1"/>
</dbReference>
<dbReference type="PANTHER" id="PTHR12786:SF1">
    <property type="entry name" value="SPLICING REGULATOR SDE2"/>
    <property type="match status" value="1"/>
</dbReference>
<dbReference type="Pfam" id="PF22782">
    <property type="entry name" value="SDE2"/>
    <property type="match status" value="1"/>
</dbReference>
<dbReference type="Pfam" id="PF13297">
    <property type="entry name" value="SDE2_2C"/>
    <property type="match status" value="1"/>
</dbReference>
<dbReference type="Pfam" id="PF22781">
    <property type="entry name" value="Sde2_N_Ubi_vert"/>
    <property type="match status" value="1"/>
</dbReference>
<reference key="1">
    <citation type="submission" date="2004-11" db="EMBL/GenBank/DDBJ databases">
        <authorList>
            <consortium name="The German cDNA consortium"/>
        </authorList>
    </citation>
    <scope>NUCLEOTIDE SEQUENCE [LARGE SCALE MRNA]</scope>
    <source>
        <tissue>Kidney</tissue>
    </source>
</reference>
<feature type="propeptide" id="PRO_0000442523" description="UBL" evidence="3">
    <location>
        <begin position="1"/>
        <end position="77"/>
    </location>
</feature>
<feature type="chain" id="PRO_0000286086" description="Splicing regulator SDE2">
    <location>
        <begin position="78"/>
        <end position="451"/>
    </location>
</feature>
<feature type="domain" description="SAP" evidence="5">
    <location>
        <begin position="396"/>
        <end position="430"/>
    </location>
</feature>
<feature type="region of interest" description="Disordered" evidence="6">
    <location>
        <begin position="182"/>
        <end position="210"/>
    </location>
</feature>
<feature type="region of interest" description="Disordered" evidence="6">
    <location>
        <begin position="222"/>
        <end position="354"/>
    </location>
</feature>
<feature type="coiled-coil region" evidence="5">
    <location>
        <begin position="109"/>
        <end position="149"/>
    </location>
</feature>
<feature type="short sequence motif" description="PIP-box" evidence="3">
    <location>
        <begin position="39"/>
        <end position="52"/>
    </location>
</feature>
<feature type="compositionally biased region" description="Basic and acidic residues" evidence="6">
    <location>
        <begin position="302"/>
        <end position="329"/>
    </location>
</feature>
<feature type="compositionally biased region" description="Basic and acidic residues" evidence="6">
    <location>
        <begin position="340"/>
        <end position="354"/>
    </location>
</feature>
<feature type="site" description="Cleavage" evidence="3">
    <location>
        <begin position="77"/>
        <end position="78"/>
    </location>
</feature>
<feature type="modified residue" description="Phosphoserine" evidence="4">
    <location>
        <position position="266"/>
    </location>
</feature>
<feature type="modified residue" description="Phosphothreonine" evidence="3">
    <location>
        <position position="274"/>
    </location>
</feature>
<feature type="modified residue" description="Phosphoserine" evidence="3">
    <location>
        <position position="278"/>
    </location>
</feature>
<feature type="modified residue" description="Phosphothreonine" evidence="3">
    <location>
        <position position="319"/>
    </location>
</feature>
<feature type="modified residue" description="Phosphoserine" evidence="2">
    <location>
        <position position="326"/>
    </location>
</feature>
<organism>
    <name type="scientific">Pongo abelii</name>
    <name type="common">Sumatran orangutan</name>
    <name type="synonym">Pongo pygmaeus abelii</name>
    <dbReference type="NCBI Taxonomy" id="9601"/>
    <lineage>
        <taxon>Eukaryota</taxon>
        <taxon>Metazoa</taxon>
        <taxon>Chordata</taxon>
        <taxon>Craniata</taxon>
        <taxon>Vertebrata</taxon>
        <taxon>Euteleostomi</taxon>
        <taxon>Mammalia</taxon>
        <taxon>Eutheria</taxon>
        <taxon>Euarchontoglires</taxon>
        <taxon>Primates</taxon>
        <taxon>Haplorrhini</taxon>
        <taxon>Catarrhini</taxon>
        <taxon>Hominidae</taxon>
        <taxon>Pongo</taxon>
    </lineage>
</organism>